<sequence length="286" mass="32424">MKKAMLALAATSVIALSACGTSSSDKIVTSKAGDITKEEFYDQMKTQAGKQVLNNMVMEKVLIKNYKVEDKDVDKKFDEMKKQYGDQFDTLLKQQGIKEETIKTGVRAQLAQEKAIEKTITDKELKENYKPEIKASHILVKDEATAKKVKEELGQGKSFEELAKQYSEDTGSKEKGGDLGYFTAGKMVKEFEDAAYKLKKDEVSEPVKSQFGYHIIKVTDIKEQKPFDEVKGDIKKDLVQKKAQDAAFMNDLMMKEIKKADVKVDDKDLKDLFEEKKADDKKEEKK</sequence>
<feature type="signal peptide" evidence="2">
    <location>
        <begin position="1"/>
        <end position="18"/>
    </location>
</feature>
<feature type="chain" id="PRO_0000029294" description="Foldase protein PrsA 1">
    <location>
        <begin position="19"/>
        <end position="286"/>
    </location>
</feature>
<feature type="domain" description="PpiC">
    <location>
        <begin position="130"/>
        <end position="220"/>
    </location>
</feature>
<feature type="lipid moiety-binding region" description="N-palmitoyl cysteine" evidence="2">
    <location>
        <position position="19"/>
    </location>
</feature>
<feature type="lipid moiety-binding region" description="S-diacylglycerol cysteine" evidence="2">
    <location>
        <position position="19"/>
    </location>
</feature>
<name>PRSA1_BACCR</name>
<gene>
    <name type="primary">prsA1</name>
    <name type="ordered locus">BC_1043</name>
</gene>
<proteinExistence type="inferred from homology"/>
<keyword id="KW-1003">Cell membrane</keyword>
<keyword id="KW-0413">Isomerase</keyword>
<keyword id="KW-0449">Lipoprotein</keyword>
<keyword id="KW-0472">Membrane</keyword>
<keyword id="KW-0564">Palmitate</keyword>
<keyword id="KW-1185">Reference proteome</keyword>
<keyword id="KW-0697">Rotamase</keyword>
<keyword id="KW-0732">Signal</keyword>
<organism>
    <name type="scientific">Bacillus cereus (strain ATCC 14579 / DSM 31 / CCUG 7414 / JCM 2152 / NBRC 15305 / NCIMB 9373 / NCTC 2599 / NRRL B-3711)</name>
    <dbReference type="NCBI Taxonomy" id="226900"/>
    <lineage>
        <taxon>Bacteria</taxon>
        <taxon>Bacillati</taxon>
        <taxon>Bacillota</taxon>
        <taxon>Bacilli</taxon>
        <taxon>Bacillales</taxon>
        <taxon>Bacillaceae</taxon>
        <taxon>Bacillus</taxon>
        <taxon>Bacillus cereus group</taxon>
    </lineage>
</organism>
<protein>
    <recommendedName>
        <fullName>Foldase protein PrsA 1</fullName>
        <ecNumber>5.2.1.8</ecNumber>
    </recommendedName>
</protein>
<accession>Q81GY5</accession>
<evidence type="ECO:0000250" key="1"/>
<evidence type="ECO:0000255" key="2"/>
<evidence type="ECO:0000305" key="3"/>
<reference key="1">
    <citation type="journal article" date="2003" name="Nature">
        <title>Genome sequence of Bacillus cereus and comparative analysis with Bacillus anthracis.</title>
        <authorList>
            <person name="Ivanova N."/>
            <person name="Sorokin A."/>
            <person name="Anderson I."/>
            <person name="Galleron N."/>
            <person name="Candelon B."/>
            <person name="Kapatral V."/>
            <person name="Bhattacharyya A."/>
            <person name="Reznik G."/>
            <person name="Mikhailova N."/>
            <person name="Lapidus A."/>
            <person name="Chu L."/>
            <person name="Mazur M."/>
            <person name="Goltsman E."/>
            <person name="Larsen N."/>
            <person name="D'Souza M."/>
            <person name="Walunas T."/>
            <person name="Grechkin Y."/>
            <person name="Pusch G."/>
            <person name="Haselkorn R."/>
            <person name="Fonstein M."/>
            <person name="Ehrlich S.D."/>
            <person name="Overbeek R."/>
            <person name="Kyrpides N.C."/>
        </authorList>
    </citation>
    <scope>NUCLEOTIDE SEQUENCE [LARGE SCALE GENOMIC DNA]</scope>
    <source>
        <strain>ATCC 14579 / DSM 31 / CCUG 7414 / JCM 2152 / NBRC 15305 / NCIMB 9373 / NCTC 2599 / NRRL B-3711</strain>
    </source>
</reference>
<comment type="function">
    <text evidence="1">Plays a major role in protein secretion by helping the post-translocational extracellular folding of several secreted proteins.</text>
</comment>
<comment type="catalytic activity">
    <reaction>
        <text>[protein]-peptidylproline (omega=180) = [protein]-peptidylproline (omega=0)</text>
        <dbReference type="Rhea" id="RHEA:16237"/>
        <dbReference type="Rhea" id="RHEA-COMP:10747"/>
        <dbReference type="Rhea" id="RHEA-COMP:10748"/>
        <dbReference type="ChEBI" id="CHEBI:83833"/>
        <dbReference type="ChEBI" id="CHEBI:83834"/>
        <dbReference type="EC" id="5.2.1.8"/>
    </reaction>
</comment>
<comment type="subcellular location">
    <subcellularLocation>
        <location evidence="3">Cell membrane</location>
        <topology evidence="3">Lipid-anchor</topology>
    </subcellularLocation>
</comment>
<comment type="similarity">
    <text evidence="3">Belongs to the PrsA family.</text>
</comment>
<dbReference type="EC" id="5.2.1.8"/>
<dbReference type="EMBL" id="AE016877">
    <property type="protein sequence ID" value="AAP08030.1"/>
    <property type="molecule type" value="Genomic_DNA"/>
</dbReference>
<dbReference type="RefSeq" id="NP_830829.1">
    <property type="nucleotide sequence ID" value="NC_004722.1"/>
</dbReference>
<dbReference type="SMR" id="Q81GY5"/>
<dbReference type="STRING" id="226900.BC_1043"/>
<dbReference type="MetOSite" id="Q81GY5"/>
<dbReference type="KEGG" id="bce:BC1043"/>
<dbReference type="PATRIC" id="fig|226900.8.peg.1001"/>
<dbReference type="HOGENOM" id="CLU_034646_6_1_9"/>
<dbReference type="OrthoDB" id="14196at2"/>
<dbReference type="Proteomes" id="UP000001417">
    <property type="component" value="Chromosome"/>
</dbReference>
<dbReference type="GO" id="GO:0005886">
    <property type="term" value="C:plasma membrane"/>
    <property type="evidence" value="ECO:0007669"/>
    <property type="project" value="UniProtKB-SubCell"/>
</dbReference>
<dbReference type="GO" id="GO:0003755">
    <property type="term" value="F:peptidyl-prolyl cis-trans isomerase activity"/>
    <property type="evidence" value="ECO:0007669"/>
    <property type="project" value="UniProtKB-UniRule"/>
</dbReference>
<dbReference type="GO" id="GO:0006457">
    <property type="term" value="P:protein folding"/>
    <property type="evidence" value="ECO:0007669"/>
    <property type="project" value="UniProtKB-UniRule"/>
</dbReference>
<dbReference type="GO" id="GO:0015031">
    <property type="term" value="P:protein transport"/>
    <property type="evidence" value="ECO:0007669"/>
    <property type="project" value="InterPro"/>
</dbReference>
<dbReference type="FunFam" id="1.10.3120.10:FF:000006">
    <property type="entry name" value="Foldase protein PrsA"/>
    <property type="match status" value="1"/>
</dbReference>
<dbReference type="FunFam" id="3.10.50.40:FF:000033">
    <property type="entry name" value="Foldase protein PrsA"/>
    <property type="match status" value="1"/>
</dbReference>
<dbReference type="Gene3D" id="3.10.50.40">
    <property type="match status" value="1"/>
</dbReference>
<dbReference type="Gene3D" id="1.10.3120.10">
    <property type="entry name" value="Trigger factor, C-terminal domain"/>
    <property type="match status" value="1"/>
</dbReference>
<dbReference type="HAMAP" id="MF_01145">
    <property type="entry name" value="Foldase_PrsA"/>
    <property type="match status" value="1"/>
</dbReference>
<dbReference type="InterPro" id="IPR023059">
    <property type="entry name" value="Foldase_PrsA"/>
</dbReference>
<dbReference type="InterPro" id="IPR046357">
    <property type="entry name" value="PPIase_dom_sf"/>
</dbReference>
<dbReference type="InterPro" id="IPR000297">
    <property type="entry name" value="PPIase_PpiC"/>
</dbReference>
<dbReference type="InterPro" id="IPR023058">
    <property type="entry name" value="PPIase_PpiC_CS"/>
</dbReference>
<dbReference type="InterPro" id="IPR050245">
    <property type="entry name" value="PrsA_foldase"/>
</dbReference>
<dbReference type="InterPro" id="IPR037041">
    <property type="entry name" value="Trigger_fac_C_sf"/>
</dbReference>
<dbReference type="InterPro" id="IPR027304">
    <property type="entry name" value="Trigger_fact/SurA_dom_sf"/>
</dbReference>
<dbReference type="NCBIfam" id="NF002846">
    <property type="entry name" value="PRK03095.1"/>
    <property type="match status" value="1"/>
</dbReference>
<dbReference type="PANTHER" id="PTHR47245:SF1">
    <property type="entry name" value="FOLDASE PROTEIN PRSA"/>
    <property type="match status" value="1"/>
</dbReference>
<dbReference type="PANTHER" id="PTHR47245">
    <property type="entry name" value="PEPTIDYLPROLYL ISOMERASE"/>
    <property type="match status" value="1"/>
</dbReference>
<dbReference type="Pfam" id="PF13616">
    <property type="entry name" value="Rotamase_3"/>
    <property type="match status" value="1"/>
</dbReference>
<dbReference type="SUPFAM" id="SSF54534">
    <property type="entry name" value="FKBP-like"/>
    <property type="match status" value="1"/>
</dbReference>
<dbReference type="SUPFAM" id="SSF109998">
    <property type="entry name" value="Triger factor/SurA peptide-binding domain-like"/>
    <property type="match status" value="1"/>
</dbReference>
<dbReference type="PROSITE" id="PS01096">
    <property type="entry name" value="PPIC_PPIASE_1"/>
    <property type="match status" value="1"/>
</dbReference>
<dbReference type="PROSITE" id="PS50198">
    <property type="entry name" value="PPIC_PPIASE_2"/>
    <property type="match status" value="1"/>
</dbReference>
<dbReference type="PROSITE" id="PS51257">
    <property type="entry name" value="PROKAR_LIPOPROTEIN"/>
    <property type="match status" value="1"/>
</dbReference>